<name>GREA_RHOE4</name>
<sequence length="164" mass="18113">MTETQVTWLTQESHDRLKNELDQLIANRPVIAAEINERREEGDLKENGGYHAAREEQGQQEARIRQLQELLNSAKVGEAPTQSGVALPGSVVKVYYDGDESDTETFLIATREEGARDAKLEVYSPNSPLGGALLEAKVGDTREYNLPNGSTMKVTLLSAEPYHS</sequence>
<accession>C1A2Y4</accession>
<organism>
    <name type="scientific">Rhodococcus erythropolis (strain PR4 / NBRC 100887)</name>
    <dbReference type="NCBI Taxonomy" id="234621"/>
    <lineage>
        <taxon>Bacteria</taxon>
        <taxon>Bacillati</taxon>
        <taxon>Actinomycetota</taxon>
        <taxon>Actinomycetes</taxon>
        <taxon>Mycobacteriales</taxon>
        <taxon>Nocardiaceae</taxon>
        <taxon>Rhodococcus</taxon>
        <taxon>Rhodococcus erythropolis group</taxon>
    </lineage>
</organism>
<comment type="function">
    <text evidence="1">Necessary for efficient RNA polymerase transcription elongation past template-encoded arresting sites. The arresting sites in DNA have the property of trapping a certain fraction of elongating RNA polymerases that pass through, resulting in locked ternary complexes. Cleavage of the nascent transcript by cleavage factors such as GreA or GreB allows the resumption of elongation from the new 3'terminus. GreA releases sequences of 2 to 3 nucleotides.</text>
</comment>
<comment type="similarity">
    <text evidence="1">Belongs to the GreA/GreB family.</text>
</comment>
<keyword id="KW-0175">Coiled coil</keyword>
<keyword id="KW-0238">DNA-binding</keyword>
<keyword id="KW-0804">Transcription</keyword>
<keyword id="KW-0805">Transcription regulation</keyword>
<feature type="chain" id="PRO_1000202867" description="Transcription elongation factor GreA">
    <location>
        <begin position="1"/>
        <end position="164"/>
    </location>
</feature>
<feature type="coiled-coil region" evidence="1">
    <location>
        <begin position="15"/>
        <end position="76"/>
    </location>
</feature>
<gene>
    <name evidence="1" type="primary">greA</name>
    <name type="ordered locus">RER_42610</name>
</gene>
<reference key="1">
    <citation type="submission" date="2005-03" db="EMBL/GenBank/DDBJ databases">
        <title>Comparison of the complete genome sequences of Rhodococcus erythropolis PR4 and Rhodococcus opacus B4.</title>
        <authorList>
            <person name="Takarada H."/>
            <person name="Sekine M."/>
            <person name="Hosoyama A."/>
            <person name="Yamada R."/>
            <person name="Fujisawa T."/>
            <person name="Omata S."/>
            <person name="Shimizu A."/>
            <person name="Tsukatani N."/>
            <person name="Tanikawa S."/>
            <person name="Fujita N."/>
            <person name="Harayama S."/>
        </authorList>
    </citation>
    <scope>NUCLEOTIDE SEQUENCE [LARGE SCALE GENOMIC DNA]</scope>
    <source>
        <strain>PR4 / NBRC 100887</strain>
    </source>
</reference>
<dbReference type="EMBL" id="AP008957">
    <property type="protein sequence ID" value="BAH34969.1"/>
    <property type="molecule type" value="Genomic_DNA"/>
</dbReference>
<dbReference type="RefSeq" id="WP_007726385.1">
    <property type="nucleotide sequence ID" value="NC_012490.1"/>
</dbReference>
<dbReference type="SMR" id="C1A2Y4"/>
<dbReference type="GeneID" id="93801537"/>
<dbReference type="KEGG" id="rer:RER_42610"/>
<dbReference type="eggNOG" id="COG0782">
    <property type="taxonomic scope" value="Bacteria"/>
</dbReference>
<dbReference type="HOGENOM" id="CLU_101379_0_0_11"/>
<dbReference type="Proteomes" id="UP000002204">
    <property type="component" value="Chromosome"/>
</dbReference>
<dbReference type="GO" id="GO:0003677">
    <property type="term" value="F:DNA binding"/>
    <property type="evidence" value="ECO:0007669"/>
    <property type="project" value="UniProtKB-UniRule"/>
</dbReference>
<dbReference type="GO" id="GO:0070063">
    <property type="term" value="F:RNA polymerase binding"/>
    <property type="evidence" value="ECO:0007669"/>
    <property type="project" value="InterPro"/>
</dbReference>
<dbReference type="GO" id="GO:0006354">
    <property type="term" value="P:DNA-templated transcription elongation"/>
    <property type="evidence" value="ECO:0007669"/>
    <property type="project" value="TreeGrafter"/>
</dbReference>
<dbReference type="GO" id="GO:0032784">
    <property type="term" value="P:regulation of DNA-templated transcription elongation"/>
    <property type="evidence" value="ECO:0007669"/>
    <property type="project" value="UniProtKB-UniRule"/>
</dbReference>
<dbReference type="FunFam" id="1.10.287.180:FF:000001">
    <property type="entry name" value="Transcription elongation factor GreA"/>
    <property type="match status" value="1"/>
</dbReference>
<dbReference type="Gene3D" id="3.10.50.30">
    <property type="entry name" value="Transcription elongation factor, GreA/GreB, C-terminal domain"/>
    <property type="match status" value="1"/>
</dbReference>
<dbReference type="Gene3D" id="1.10.287.180">
    <property type="entry name" value="Transcription elongation factor, GreA/GreB, N-terminal domain"/>
    <property type="match status" value="1"/>
</dbReference>
<dbReference type="HAMAP" id="MF_00105">
    <property type="entry name" value="GreA_GreB"/>
    <property type="match status" value="1"/>
</dbReference>
<dbReference type="InterPro" id="IPR036953">
    <property type="entry name" value="GreA/GreB_C_sf"/>
</dbReference>
<dbReference type="InterPro" id="IPR018151">
    <property type="entry name" value="TF_GreA/GreB_CS"/>
</dbReference>
<dbReference type="InterPro" id="IPR006359">
    <property type="entry name" value="Tscrpt_elong_fac_GreA"/>
</dbReference>
<dbReference type="InterPro" id="IPR028624">
    <property type="entry name" value="Tscrpt_elong_fac_GreA/B"/>
</dbReference>
<dbReference type="InterPro" id="IPR001437">
    <property type="entry name" value="Tscrpt_elong_fac_GreA/B_C"/>
</dbReference>
<dbReference type="InterPro" id="IPR023459">
    <property type="entry name" value="Tscrpt_elong_fac_GreA/B_fam"/>
</dbReference>
<dbReference type="InterPro" id="IPR022691">
    <property type="entry name" value="Tscrpt_elong_fac_GreA/B_N"/>
</dbReference>
<dbReference type="InterPro" id="IPR036805">
    <property type="entry name" value="Tscrpt_elong_fac_GreA/B_N_sf"/>
</dbReference>
<dbReference type="NCBIfam" id="TIGR01462">
    <property type="entry name" value="greA"/>
    <property type="match status" value="1"/>
</dbReference>
<dbReference type="NCBIfam" id="NF001262">
    <property type="entry name" value="PRK00226.1-3"/>
    <property type="match status" value="1"/>
</dbReference>
<dbReference type="PANTHER" id="PTHR30437">
    <property type="entry name" value="TRANSCRIPTION ELONGATION FACTOR GREA"/>
    <property type="match status" value="1"/>
</dbReference>
<dbReference type="PANTHER" id="PTHR30437:SF4">
    <property type="entry name" value="TRANSCRIPTION ELONGATION FACTOR GREA"/>
    <property type="match status" value="1"/>
</dbReference>
<dbReference type="Pfam" id="PF01272">
    <property type="entry name" value="GreA_GreB"/>
    <property type="match status" value="1"/>
</dbReference>
<dbReference type="Pfam" id="PF03449">
    <property type="entry name" value="GreA_GreB_N"/>
    <property type="match status" value="1"/>
</dbReference>
<dbReference type="PIRSF" id="PIRSF006092">
    <property type="entry name" value="GreA_GreB"/>
    <property type="match status" value="1"/>
</dbReference>
<dbReference type="SUPFAM" id="SSF54534">
    <property type="entry name" value="FKBP-like"/>
    <property type="match status" value="1"/>
</dbReference>
<dbReference type="SUPFAM" id="SSF46557">
    <property type="entry name" value="GreA transcript cleavage protein, N-terminal domain"/>
    <property type="match status" value="1"/>
</dbReference>
<dbReference type="PROSITE" id="PS00829">
    <property type="entry name" value="GREAB_1"/>
    <property type="match status" value="1"/>
</dbReference>
<dbReference type="PROSITE" id="PS00830">
    <property type="entry name" value="GREAB_2"/>
    <property type="match status" value="1"/>
</dbReference>
<protein>
    <recommendedName>
        <fullName evidence="1">Transcription elongation factor GreA</fullName>
    </recommendedName>
    <alternativeName>
        <fullName evidence="1">Transcript cleavage factor GreA</fullName>
    </alternativeName>
</protein>
<proteinExistence type="inferred from homology"/>
<evidence type="ECO:0000255" key="1">
    <source>
        <dbReference type="HAMAP-Rule" id="MF_00105"/>
    </source>
</evidence>